<name>NDPA_ECOLU</name>
<feature type="chain" id="PRO_1000191559" description="Nucleoid-associated protein YejK">
    <location>
        <begin position="1"/>
        <end position="335"/>
    </location>
</feature>
<sequence>MSLDINQIALHQLIKRDEQNLELVLRDSLLEPTETVVEMVAELHRVYSAKNKAYGLFSEESELAQTLRLQRQGEEDFLAFSRAATGRLRDELAKYPFADGGFVLFCHYRYLAVEYLLVAVLSNLSSMRVNENLDINPTHYLDINHADIVARIDLTEWETNPESTRYLTFLKGRVGRKVADFFMDFLGASEGLNAKAQNRGLLQAVDDFTAEAQLDKAERQNVRQQVYSYCNEQLQAGEEIELESLSKELAGVSEVSFTEFAAEKGYELEESFPADRSTLRQLTKFAGSGGGLTINFDAMLLGERIFWDPATDTLTIKGTPPNLRDQLQRRTSGGN</sequence>
<organism>
    <name type="scientific">Escherichia coli O17:K52:H18 (strain UMN026 / ExPEC)</name>
    <dbReference type="NCBI Taxonomy" id="585056"/>
    <lineage>
        <taxon>Bacteria</taxon>
        <taxon>Pseudomonadati</taxon>
        <taxon>Pseudomonadota</taxon>
        <taxon>Gammaproteobacteria</taxon>
        <taxon>Enterobacterales</taxon>
        <taxon>Enterobacteriaceae</taxon>
        <taxon>Escherichia</taxon>
    </lineage>
</organism>
<accession>B7N5F0</accession>
<keyword id="KW-0963">Cytoplasm</keyword>
<protein>
    <recommendedName>
        <fullName evidence="1">Nucleoid-associated protein YejK</fullName>
    </recommendedName>
</protein>
<gene>
    <name evidence="1" type="primary">yejK</name>
    <name type="ordered locus">ECUMN_2523</name>
</gene>
<reference key="1">
    <citation type="journal article" date="2009" name="PLoS Genet.">
        <title>Organised genome dynamics in the Escherichia coli species results in highly diverse adaptive paths.</title>
        <authorList>
            <person name="Touchon M."/>
            <person name="Hoede C."/>
            <person name="Tenaillon O."/>
            <person name="Barbe V."/>
            <person name="Baeriswyl S."/>
            <person name="Bidet P."/>
            <person name="Bingen E."/>
            <person name="Bonacorsi S."/>
            <person name="Bouchier C."/>
            <person name="Bouvet O."/>
            <person name="Calteau A."/>
            <person name="Chiapello H."/>
            <person name="Clermont O."/>
            <person name="Cruveiller S."/>
            <person name="Danchin A."/>
            <person name="Diard M."/>
            <person name="Dossat C."/>
            <person name="Karoui M.E."/>
            <person name="Frapy E."/>
            <person name="Garry L."/>
            <person name="Ghigo J.M."/>
            <person name="Gilles A.M."/>
            <person name="Johnson J."/>
            <person name="Le Bouguenec C."/>
            <person name="Lescat M."/>
            <person name="Mangenot S."/>
            <person name="Martinez-Jehanne V."/>
            <person name="Matic I."/>
            <person name="Nassif X."/>
            <person name="Oztas S."/>
            <person name="Petit M.A."/>
            <person name="Pichon C."/>
            <person name="Rouy Z."/>
            <person name="Ruf C.S."/>
            <person name="Schneider D."/>
            <person name="Tourret J."/>
            <person name="Vacherie B."/>
            <person name="Vallenet D."/>
            <person name="Medigue C."/>
            <person name="Rocha E.P.C."/>
            <person name="Denamur E."/>
        </authorList>
    </citation>
    <scope>NUCLEOTIDE SEQUENCE [LARGE SCALE GENOMIC DNA]</scope>
    <source>
        <strain>UMN026 / ExPEC</strain>
    </source>
</reference>
<comment type="subcellular location">
    <subcellularLocation>
        <location evidence="1">Cytoplasm</location>
        <location evidence="1">Nucleoid</location>
    </subcellularLocation>
</comment>
<comment type="similarity">
    <text evidence="1">Belongs to the YejK family.</text>
</comment>
<dbReference type="EMBL" id="CU928163">
    <property type="protein sequence ID" value="CAR13709.1"/>
    <property type="molecule type" value="Genomic_DNA"/>
</dbReference>
<dbReference type="RefSeq" id="WP_000050789.1">
    <property type="nucleotide sequence ID" value="NC_011751.1"/>
</dbReference>
<dbReference type="RefSeq" id="YP_002413237.1">
    <property type="nucleotide sequence ID" value="NC_011751.1"/>
</dbReference>
<dbReference type="SMR" id="B7N5F0"/>
<dbReference type="STRING" id="585056.ECUMN_2523"/>
<dbReference type="GeneID" id="75206440"/>
<dbReference type="KEGG" id="eum:ECUMN_2523"/>
<dbReference type="PATRIC" id="fig|585056.7.peg.2705"/>
<dbReference type="HOGENOM" id="CLU_063050_0_1_6"/>
<dbReference type="Proteomes" id="UP000007097">
    <property type="component" value="Chromosome"/>
</dbReference>
<dbReference type="GO" id="GO:0043590">
    <property type="term" value="C:bacterial nucleoid"/>
    <property type="evidence" value="ECO:0007669"/>
    <property type="project" value="TreeGrafter"/>
</dbReference>
<dbReference type="GO" id="GO:0005737">
    <property type="term" value="C:cytoplasm"/>
    <property type="evidence" value="ECO:0007669"/>
    <property type="project" value="UniProtKB-UniRule"/>
</dbReference>
<dbReference type="GO" id="GO:0003690">
    <property type="term" value="F:double-stranded DNA binding"/>
    <property type="evidence" value="ECO:0007669"/>
    <property type="project" value="TreeGrafter"/>
</dbReference>
<dbReference type="GO" id="GO:0003727">
    <property type="term" value="F:single-stranded RNA binding"/>
    <property type="evidence" value="ECO:0007669"/>
    <property type="project" value="TreeGrafter"/>
</dbReference>
<dbReference type="HAMAP" id="MF_00730">
    <property type="entry name" value="NdpA"/>
    <property type="match status" value="1"/>
</dbReference>
<dbReference type="InterPro" id="IPR007358">
    <property type="entry name" value="Nucleoid_associated_NdpA"/>
</dbReference>
<dbReference type="NCBIfam" id="NF001557">
    <property type="entry name" value="PRK00378.1"/>
    <property type="match status" value="1"/>
</dbReference>
<dbReference type="PANTHER" id="PTHR38772">
    <property type="match status" value="1"/>
</dbReference>
<dbReference type="PANTHER" id="PTHR38772:SF1">
    <property type="entry name" value="NUCLEOID-ASSOCIATED PROTEIN YEJK"/>
    <property type="match status" value="1"/>
</dbReference>
<dbReference type="Pfam" id="PF04245">
    <property type="entry name" value="NA37"/>
    <property type="match status" value="1"/>
</dbReference>
<evidence type="ECO:0000255" key="1">
    <source>
        <dbReference type="HAMAP-Rule" id="MF_00730"/>
    </source>
</evidence>
<proteinExistence type="inferred from homology"/>